<organism>
    <name type="scientific">Saccharomyces cerevisiae (strain ATCC 204508 / S288c)</name>
    <name type="common">Baker's yeast</name>
    <dbReference type="NCBI Taxonomy" id="559292"/>
    <lineage>
        <taxon>Eukaryota</taxon>
        <taxon>Fungi</taxon>
        <taxon>Dikarya</taxon>
        <taxon>Ascomycota</taxon>
        <taxon>Saccharomycotina</taxon>
        <taxon>Saccharomycetes</taxon>
        <taxon>Saccharomycetales</taxon>
        <taxon>Saccharomycetaceae</taxon>
        <taxon>Saccharomyces</taxon>
    </lineage>
</organism>
<keyword id="KW-0156">Chromatin regulator</keyword>
<keyword id="KW-0479">Metal-binding</keyword>
<keyword id="KW-0539">Nucleus</keyword>
<keyword id="KW-0597">Phosphoprotein</keyword>
<keyword id="KW-1185">Reference proteome</keyword>
<keyword id="KW-0678">Repressor</keyword>
<keyword id="KW-0804">Transcription</keyword>
<keyword id="KW-0805">Transcription regulation</keyword>
<keyword id="KW-0862">Zinc</keyword>
<keyword id="KW-0863">Zinc-finger</keyword>
<comment type="function">
    <text evidence="4 7 10">Component of the RPD3C(L) histone deacetylase complex (HDAC). Responsible for the deacetylation of lysine residues on the N-terminal part of the core histones (H2A, H2B, H3 and H4). Histone deacetylation gives a tag for epigenetic repression and plays an important role in transcriptional regulation, cell cycle progression and developmental events. CTI6 links the SAGA coactivator to the CYC8-TUP1 corepressor. Involved in transcription regulation of heme-regulated genes and required for GCN5 recruitment, histone H3 acetylation and SPT15/TBP binding to promoters.</text>
</comment>
<comment type="subunit">
    <text evidence="3 4 8 9">Component of the RPD3C(L) complex composed of at least ASH1, CTI6, DEP1, PHO23, RPD3, RXT2, RXT3, SAP30, SDS3, SIN3, UME1 and UME6. Interacts with CYC8.</text>
</comment>
<comment type="subcellular location">
    <subcellularLocation>
        <location evidence="4 5 7">Nucleus</location>
    </subcellularLocation>
</comment>
<comment type="induction">
    <text evidence="7">Under low iron conditions.</text>
</comment>
<comment type="miscellaneous">
    <text evidence="6">Present with 1590 molecules/cell in log phase SD medium.</text>
</comment>
<evidence type="ECO:0000255" key="1">
    <source>
        <dbReference type="PROSITE-ProRule" id="PRU00146"/>
    </source>
</evidence>
<evidence type="ECO:0000256" key="2">
    <source>
        <dbReference type="SAM" id="MobiDB-lite"/>
    </source>
</evidence>
<evidence type="ECO:0000269" key="3">
    <source>
    </source>
</evidence>
<evidence type="ECO:0000269" key="4">
    <source>
    </source>
</evidence>
<evidence type="ECO:0000269" key="5">
    <source>
    </source>
</evidence>
<evidence type="ECO:0000269" key="6">
    <source>
    </source>
</evidence>
<evidence type="ECO:0000269" key="7">
    <source>
    </source>
</evidence>
<evidence type="ECO:0000269" key="8">
    <source>
    </source>
</evidence>
<evidence type="ECO:0000269" key="9">
    <source>
    </source>
</evidence>
<evidence type="ECO:0000269" key="10">
    <source>
    </source>
</evidence>
<evidence type="ECO:0000305" key="11"/>
<evidence type="ECO:0007744" key="12">
    <source>
    </source>
</evidence>
<evidence type="ECO:0007744" key="13">
    <source>
    </source>
</evidence>
<sequence>MESTAIVPKGPVVGSEDMEKAEVIASGSTDIISTTSTATTTAAIGSVQEESVKQEDVPMEGGEGEVEEEEGETRCICGELDTPDDSGFFIQCEQCSSWQHGYCVSITQDNAPDKYWCEQCRPELHQLFTTDTGEARSIYKPVQEKRRQSRRKARSAAASKSHAANEAEKSPRNTSNTDDNVDDIGDEEDEVEDEASAVALAKDGNTRSSRRRRRNSMDDASTDQYSLDPGDSDKKLLDRKRATFMAREEKQYQRMLEKALKESRRTSHQEDPESYENDADIYQGDTDNHNGTTRLQTDVMLTEGKPDSVTNDDMKESLRPSKEQSMEKTNDVEKEASQEKESSTGSAQDTEKTDEPILPLTSISSSEDDSRKASSRGSKRVSKPARKGNRTRRSNTSSDTNQNRRSADIGTDKPVKPRLPPQRTSLNEMRRRVSAILEFISRTQWELSEDQSDREEFVRFVENQHFVEKVDTIYNGYNESLSMMDDLTRELLLWEKKYSNNTNAIQ</sequence>
<protein>
    <recommendedName>
        <fullName>Histone deacetylase complex subunit CTI6</fullName>
    </recommendedName>
    <alternativeName>
        <fullName>CYC8-TUP1-interacting protein 6</fullName>
    </alternativeName>
    <alternativeName>
        <fullName>Transcriptional regulatory protein CTI6</fullName>
    </alternativeName>
</protein>
<dbReference type="EMBL" id="Z73538">
    <property type="protein sequence ID" value="CAA97891.1"/>
    <property type="molecule type" value="Genomic_DNA"/>
</dbReference>
<dbReference type="EMBL" id="AY692957">
    <property type="protein sequence ID" value="AAT92976.1"/>
    <property type="molecule type" value="Genomic_DNA"/>
</dbReference>
<dbReference type="EMBL" id="BK006949">
    <property type="protein sequence ID" value="DAA11253.1"/>
    <property type="molecule type" value="Genomic_DNA"/>
</dbReference>
<dbReference type="PIR" id="S65193">
    <property type="entry name" value="S65193"/>
</dbReference>
<dbReference type="RefSeq" id="NP_015144.1">
    <property type="nucleotide sequence ID" value="NM_001183995.1"/>
</dbReference>
<dbReference type="SMR" id="Q08923"/>
<dbReference type="BioGRID" id="36001">
    <property type="interactions" value="392"/>
</dbReference>
<dbReference type="ComplexPortal" id="CPX-1852">
    <property type="entry name" value="RPD3L histone deacetylase complex"/>
</dbReference>
<dbReference type="DIP" id="DIP-2958N"/>
<dbReference type="FunCoup" id="Q08923">
    <property type="interactions" value="169"/>
</dbReference>
<dbReference type="IntAct" id="Q08923">
    <property type="interactions" value="19"/>
</dbReference>
<dbReference type="MINT" id="Q08923"/>
<dbReference type="STRING" id="4932.YPL181W"/>
<dbReference type="iPTMnet" id="Q08923"/>
<dbReference type="PaxDb" id="4932-YPL181W"/>
<dbReference type="PeptideAtlas" id="Q08923"/>
<dbReference type="EnsemblFungi" id="YPL181W_mRNA">
    <property type="protein sequence ID" value="YPL181W"/>
    <property type="gene ID" value="YPL181W"/>
</dbReference>
<dbReference type="GeneID" id="855920"/>
<dbReference type="KEGG" id="sce:YPL181W"/>
<dbReference type="AGR" id="SGD:S000006102"/>
<dbReference type="SGD" id="S000006102">
    <property type="gene designation" value="CTI6"/>
</dbReference>
<dbReference type="VEuPathDB" id="FungiDB:YPL181W"/>
<dbReference type="eggNOG" id="KOG1844">
    <property type="taxonomic scope" value="Eukaryota"/>
</dbReference>
<dbReference type="HOGENOM" id="CLU_020879_1_0_1"/>
<dbReference type="InParanoid" id="Q08923"/>
<dbReference type="OMA" id="RPRYMNP"/>
<dbReference type="OrthoDB" id="418595at2759"/>
<dbReference type="BioCyc" id="YEAST:G3O-34076-MONOMER"/>
<dbReference type="BioGRID-ORCS" id="855920">
    <property type="hits" value="7 hits in 10 CRISPR screens"/>
</dbReference>
<dbReference type="PRO" id="PR:Q08923"/>
<dbReference type="Proteomes" id="UP000002311">
    <property type="component" value="Chromosome XVI"/>
</dbReference>
<dbReference type="RNAct" id="Q08923">
    <property type="molecule type" value="protein"/>
</dbReference>
<dbReference type="GO" id="GO:0005634">
    <property type="term" value="C:nucleus"/>
    <property type="evidence" value="ECO:0000303"/>
    <property type="project" value="ComplexPortal"/>
</dbReference>
<dbReference type="GO" id="GO:0033698">
    <property type="term" value="C:Rpd3L complex"/>
    <property type="evidence" value="ECO:0000314"/>
    <property type="project" value="SGD"/>
</dbReference>
<dbReference type="GO" id="GO:0070210">
    <property type="term" value="C:Rpd3L-Expanded complex"/>
    <property type="evidence" value="ECO:0007005"/>
    <property type="project" value="SGD"/>
</dbReference>
<dbReference type="GO" id="GO:0035064">
    <property type="term" value="F:methylated histone binding"/>
    <property type="evidence" value="ECO:0000314"/>
    <property type="project" value="SGD"/>
</dbReference>
<dbReference type="GO" id="GO:0008270">
    <property type="term" value="F:zinc ion binding"/>
    <property type="evidence" value="ECO:0007669"/>
    <property type="project" value="UniProtKB-KW"/>
</dbReference>
<dbReference type="GO" id="GO:0061188">
    <property type="term" value="P:negative regulation of rDNA heterochromatin formation"/>
    <property type="evidence" value="ECO:0000315"/>
    <property type="project" value="SGD"/>
</dbReference>
<dbReference type="GO" id="GO:0061186">
    <property type="term" value="P:negative regulation of silent mating-type cassette heterochromatin formation"/>
    <property type="evidence" value="ECO:0000315"/>
    <property type="project" value="SGD"/>
</dbReference>
<dbReference type="GO" id="GO:0006334">
    <property type="term" value="P:nucleosome assembly"/>
    <property type="evidence" value="ECO:0000303"/>
    <property type="project" value="ComplexPortal"/>
</dbReference>
<dbReference type="GO" id="GO:0045893">
    <property type="term" value="P:positive regulation of DNA-templated transcription"/>
    <property type="evidence" value="ECO:0000315"/>
    <property type="project" value="SGD"/>
</dbReference>
<dbReference type="GO" id="GO:0030174">
    <property type="term" value="P:regulation of DNA-templated DNA replication initiation"/>
    <property type="evidence" value="ECO:0000315"/>
    <property type="project" value="SGD"/>
</dbReference>
<dbReference type="GO" id="GO:0006357">
    <property type="term" value="P:regulation of transcription by RNA polymerase II"/>
    <property type="evidence" value="ECO:0000303"/>
    <property type="project" value="ComplexPortal"/>
</dbReference>
<dbReference type="CDD" id="cd15550">
    <property type="entry name" value="PHD_MLL5"/>
    <property type="match status" value="1"/>
</dbReference>
<dbReference type="FunFam" id="3.30.40.10:FF:000593">
    <property type="entry name" value="Cti6p"/>
    <property type="match status" value="1"/>
</dbReference>
<dbReference type="Gene3D" id="3.30.40.10">
    <property type="entry name" value="Zinc/RING finger domain, C3HC4 (zinc finger)"/>
    <property type="match status" value="1"/>
</dbReference>
<dbReference type="InterPro" id="IPR053051">
    <property type="entry name" value="HDAC_complex_subunit"/>
</dbReference>
<dbReference type="InterPro" id="IPR019786">
    <property type="entry name" value="Zinc_finger_PHD-type_CS"/>
</dbReference>
<dbReference type="InterPro" id="IPR011011">
    <property type="entry name" value="Znf_FYVE_PHD"/>
</dbReference>
<dbReference type="InterPro" id="IPR001965">
    <property type="entry name" value="Znf_PHD"/>
</dbReference>
<dbReference type="InterPro" id="IPR019787">
    <property type="entry name" value="Znf_PHD-finger"/>
</dbReference>
<dbReference type="InterPro" id="IPR013083">
    <property type="entry name" value="Znf_RING/FYVE/PHD"/>
</dbReference>
<dbReference type="PANTHER" id="PTHR47793">
    <property type="entry name" value="HISTONE DEACETYLASE COMPLEX SUBUNIT CTI6"/>
    <property type="match status" value="1"/>
</dbReference>
<dbReference type="PANTHER" id="PTHR47793:SF1">
    <property type="entry name" value="HISTONE DEACETYLASE COMPLEX SUBUNIT CTI6"/>
    <property type="match status" value="1"/>
</dbReference>
<dbReference type="Pfam" id="PF20826">
    <property type="entry name" value="PHD_5"/>
    <property type="match status" value="1"/>
</dbReference>
<dbReference type="SMART" id="SM00249">
    <property type="entry name" value="PHD"/>
    <property type="match status" value="1"/>
</dbReference>
<dbReference type="SUPFAM" id="SSF57903">
    <property type="entry name" value="FYVE/PHD zinc finger"/>
    <property type="match status" value="1"/>
</dbReference>
<dbReference type="PROSITE" id="PS01359">
    <property type="entry name" value="ZF_PHD_1"/>
    <property type="match status" value="1"/>
</dbReference>
<dbReference type="PROSITE" id="PS50016">
    <property type="entry name" value="ZF_PHD_2"/>
    <property type="match status" value="1"/>
</dbReference>
<accession>Q08923</accession>
<accession>D6W3I7</accession>
<accession>Q6B1X3</accession>
<name>CTI6_YEAST</name>
<feature type="chain" id="PRO_0000234079" description="Histone deacetylase complex subunit CTI6">
    <location>
        <begin position="1"/>
        <end position="506"/>
    </location>
</feature>
<feature type="zinc finger region" description="PHD-type" evidence="1">
    <location>
        <begin position="72"/>
        <end position="123"/>
    </location>
</feature>
<feature type="region of interest" description="Disordered" evidence="2">
    <location>
        <begin position="49"/>
        <end position="71"/>
    </location>
</feature>
<feature type="region of interest" description="Disordered" evidence="2">
    <location>
        <begin position="138"/>
        <end position="425"/>
    </location>
</feature>
<feature type="compositionally biased region" description="Acidic residues" evidence="2">
    <location>
        <begin position="62"/>
        <end position="71"/>
    </location>
</feature>
<feature type="compositionally biased region" description="Acidic residues" evidence="2">
    <location>
        <begin position="179"/>
        <end position="195"/>
    </location>
</feature>
<feature type="compositionally biased region" description="Basic and acidic residues" evidence="2">
    <location>
        <begin position="231"/>
        <end position="271"/>
    </location>
</feature>
<feature type="compositionally biased region" description="Basic and acidic residues" evidence="2">
    <location>
        <begin position="312"/>
        <end position="342"/>
    </location>
</feature>
<feature type="compositionally biased region" description="Basic residues" evidence="2">
    <location>
        <begin position="373"/>
        <end position="393"/>
    </location>
</feature>
<feature type="compositionally biased region" description="Polar residues" evidence="2">
    <location>
        <begin position="394"/>
        <end position="404"/>
    </location>
</feature>
<feature type="compositionally biased region" description="Basic and acidic residues" evidence="2">
    <location>
        <begin position="405"/>
        <end position="415"/>
    </location>
</feature>
<feature type="modified residue" description="Phosphothreonine" evidence="13">
    <location>
        <position position="174"/>
    </location>
</feature>
<feature type="modified residue" description="Phosphoserine" evidence="13">
    <location>
        <position position="175"/>
    </location>
</feature>
<feature type="modified residue" description="Phosphothreonine" evidence="13">
    <location>
        <position position="177"/>
    </location>
</feature>
<feature type="modified residue" description="Phosphoserine" evidence="12 13">
    <location>
        <position position="216"/>
    </location>
</feature>
<feature type="modified residue" description="Phosphoserine" evidence="13">
    <location>
        <position position="267"/>
    </location>
</feature>
<feature type="mutagenesis site" description="Impairs growth under iron-limiting conditions." evidence="7">
    <original>C</original>
    <variation>A</variation>
    <location>
        <position position="95"/>
    </location>
</feature>
<feature type="mutagenesis site" description="Impairs growth under iron-limiting conditions." evidence="7">
    <original>H</original>
    <variation>A</variation>
    <location>
        <position position="100"/>
    </location>
</feature>
<feature type="sequence conflict" description="In Ref. 3; AAT92976." evidence="11" ref="3">
    <original>S</original>
    <variation>P</variation>
    <location>
        <position position="342"/>
    </location>
</feature>
<gene>
    <name type="primary">CTI6</name>
    <name type="synonym">RXT1</name>
    <name type="ordered locus">YPL181W</name>
</gene>
<proteinExistence type="evidence at protein level"/>
<reference key="1">
    <citation type="journal article" date="1997" name="Nature">
        <title>The nucleotide sequence of Saccharomyces cerevisiae chromosome XVI.</title>
        <authorList>
            <person name="Bussey H."/>
            <person name="Storms R.K."/>
            <person name="Ahmed A."/>
            <person name="Albermann K."/>
            <person name="Allen E."/>
            <person name="Ansorge W."/>
            <person name="Araujo R."/>
            <person name="Aparicio A."/>
            <person name="Barrell B.G."/>
            <person name="Badcock K."/>
            <person name="Benes V."/>
            <person name="Botstein D."/>
            <person name="Bowman S."/>
            <person name="Brueckner M."/>
            <person name="Carpenter J."/>
            <person name="Cherry J.M."/>
            <person name="Chung E."/>
            <person name="Churcher C.M."/>
            <person name="Coster F."/>
            <person name="Davis K."/>
            <person name="Davis R.W."/>
            <person name="Dietrich F.S."/>
            <person name="Delius H."/>
            <person name="DiPaolo T."/>
            <person name="Dubois E."/>
            <person name="Duesterhoeft A."/>
            <person name="Duncan M."/>
            <person name="Floeth M."/>
            <person name="Fortin N."/>
            <person name="Friesen J.D."/>
            <person name="Fritz C."/>
            <person name="Goffeau A."/>
            <person name="Hall J."/>
            <person name="Hebling U."/>
            <person name="Heumann K."/>
            <person name="Hilbert H."/>
            <person name="Hillier L.W."/>
            <person name="Hunicke-Smith S."/>
            <person name="Hyman R.W."/>
            <person name="Johnston M."/>
            <person name="Kalman S."/>
            <person name="Kleine K."/>
            <person name="Komp C."/>
            <person name="Kurdi O."/>
            <person name="Lashkari D."/>
            <person name="Lew H."/>
            <person name="Lin A."/>
            <person name="Lin D."/>
            <person name="Louis E.J."/>
            <person name="Marathe R."/>
            <person name="Messenguy F."/>
            <person name="Mewes H.-W."/>
            <person name="Mirtipati S."/>
            <person name="Moestl D."/>
            <person name="Mueller-Auer S."/>
            <person name="Namath A."/>
            <person name="Nentwich U."/>
            <person name="Oefner P."/>
            <person name="Pearson D."/>
            <person name="Petel F.X."/>
            <person name="Pohl T.M."/>
            <person name="Purnelle B."/>
            <person name="Rajandream M.A."/>
            <person name="Rechmann S."/>
            <person name="Rieger M."/>
            <person name="Riles L."/>
            <person name="Roberts D."/>
            <person name="Schaefer M."/>
            <person name="Scharfe M."/>
            <person name="Scherens B."/>
            <person name="Schramm S."/>
            <person name="Schroeder M."/>
            <person name="Sdicu A.-M."/>
            <person name="Tettelin H."/>
            <person name="Urrestarazu L.A."/>
            <person name="Ushinsky S."/>
            <person name="Vierendeels F."/>
            <person name="Vissers S."/>
            <person name="Voss H."/>
            <person name="Walsh S.V."/>
            <person name="Wambutt R."/>
            <person name="Wang Y."/>
            <person name="Wedler E."/>
            <person name="Wedler H."/>
            <person name="Winnett E."/>
            <person name="Zhong W.-W."/>
            <person name="Zollner A."/>
            <person name="Vo D.H."/>
            <person name="Hani J."/>
        </authorList>
    </citation>
    <scope>NUCLEOTIDE SEQUENCE [LARGE SCALE GENOMIC DNA]</scope>
    <source>
        <strain>ATCC 204508 / S288c</strain>
    </source>
</reference>
<reference key="2">
    <citation type="journal article" date="2014" name="G3 (Bethesda)">
        <title>The reference genome sequence of Saccharomyces cerevisiae: Then and now.</title>
        <authorList>
            <person name="Engel S.R."/>
            <person name="Dietrich F.S."/>
            <person name="Fisk D.G."/>
            <person name="Binkley G."/>
            <person name="Balakrishnan R."/>
            <person name="Costanzo M.C."/>
            <person name="Dwight S.S."/>
            <person name="Hitz B.C."/>
            <person name="Karra K."/>
            <person name="Nash R.S."/>
            <person name="Weng S."/>
            <person name="Wong E.D."/>
            <person name="Lloyd P."/>
            <person name="Skrzypek M.S."/>
            <person name="Miyasato S.R."/>
            <person name="Simison M."/>
            <person name="Cherry J.M."/>
        </authorList>
    </citation>
    <scope>GENOME REANNOTATION</scope>
    <source>
        <strain>ATCC 204508 / S288c</strain>
    </source>
</reference>
<reference key="3">
    <citation type="journal article" date="2007" name="Genome Res.">
        <title>Approaching a complete repository of sequence-verified protein-encoding clones for Saccharomyces cerevisiae.</title>
        <authorList>
            <person name="Hu Y."/>
            <person name="Rolfs A."/>
            <person name="Bhullar B."/>
            <person name="Murthy T.V.S."/>
            <person name="Zhu C."/>
            <person name="Berger M.F."/>
            <person name="Camargo A.A."/>
            <person name="Kelley F."/>
            <person name="McCarron S."/>
            <person name="Jepson D."/>
            <person name="Richardson A."/>
            <person name="Raphael J."/>
            <person name="Moreira D."/>
            <person name="Taycher E."/>
            <person name="Zuo D."/>
            <person name="Mohr S."/>
            <person name="Kane M.F."/>
            <person name="Williamson J."/>
            <person name="Simpson A.J.G."/>
            <person name="Bulyk M.L."/>
            <person name="Harlow E."/>
            <person name="Marsischky G."/>
            <person name="Kolodner R.D."/>
            <person name="LaBaer J."/>
        </authorList>
    </citation>
    <scope>NUCLEOTIDE SEQUENCE [GENOMIC DNA]</scope>
    <source>
        <strain>ATCC 204508 / S288c</strain>
    </source>
</reference>
<reference key="4">
    <citation type="journal article" date="2002" name="Mol. Cell">
        <title>Cti6, a PHD domain protein, bridges the Cyc8-Tup1 corepressor and the SAGA coactivator to overcome repression at GAL1.</title>
        <authorList>
            <person name="Papamichos-Chronakis M."/>
            <person name="Petrakis T."/>
            <person name="Ktistaki E."/>
            <person name="Topalidou I."/>
            <person name="Tzamarias D."/>
        </authorList>
    </citation>
    <scope>FUNCTION</scope>
    <scope>SUBCELLULAR LOCATION</scope>
    <scope>INTERACTION WITH CYC8</scope>
</reference>
<reference key="5">
    <citation type="journal article" date="2002" name="Nature">
        <title>Functional organization of the yeast proteome by systematic analysis of protein complexes.</title>
        <authorList>
            <person name="Gavin A.-C."/>
            <person name="Boesche M."/>
            <person name="Krause R."/>
            <person name="Grandi P."/>
            <person name="Marzioch M."/>
            <person name="Bauer A."/>
            <person name="Schultz J."/>
            <person name="Rick J.M."/>
            <person name="Michon A.-M."/>
            <person name="Cruciat C.-M."/>
            <person name="Remor M."/>
            <person name="Hoefert C."/>
            <person name="Schelder M."/>
            <person name="Brajenovic M."/>
            <person name="Ruffner H."/>
            <person name="Merino A."/>
            <person name="Klein K."/>
            <person name="Hudak M."/>
            <person name="Dickson D."/>
            <person name="Rudi T."/>
            <person name="Gnau V."/>
            <person name="Bauch A."/>
            <person name="Bastuck S."/>
            <person name="Huhse B."/>
            <person name="Leutwein C."/>
            <person name="Heurtier M.-A."/>
            <person name="Copley R.R."/>
            <person name="Edelmann A."/>
            <person name="Querfurth E."/>
            <person name="Rybin V."/>
            <person name="Drewes G."/>
            <person name="Raida M."/>
            <person name="Bouwmeester T."/>
            <person name="Bork P."/>
            <person name="Seraphin B."/>
            <person name="Kuster B."/>
            <person name="Neubauer G."/>
            <person name="Superti-Furga G."/>
        </authorList>
    </citation>
    <scope>INTERACTION WITH RPD3 AND SIN3</scope>
</reference>
<reference key="6">
    <citation type="journal article" date="2003" name="Nature">
        <title>Global analysis of protein localization in budding yeast.</title>
        <authorList>
            <person name="Huh W.-K."/>
            <person name="Falvo J.V."/>
            <person name="Gerke L.C."/>
            <person name="Carroll A.S."/>
            <person name="Howson R.W."/>
            <person name="Weissman J.S."/>
            <person name="O'Shea E.K."/>
        </authorList>
    </citation>
    <scope>SUBCELLULAR LOCATION [LARGE SCALE ANALYSIS]</scope>
</reference>
<reference key="7">
    <citation type="journal article" date="2003" name="Nature">
        <title>Global analysis of protein expression in yeast.</title>
        <authorList>
            <person name="Ghaemmaghami S."/>
            <person name="Huh W.-K."/>
            <person name="Bower K."/>
            <person name="Howson R.W."/>
            <person name="Belle A."/>
            <person name="Dephoure N."/>
            <person name="O'Shea E.K."/>
            <person name="Weissman J.S."/>
        </authorList>
    </citation>
    <scope>LEVEL OF PROTEIN EXPRESSION [LARGE SCALE ANALYSIS]</scope>
</reference>
<reference key="8">
    <citation type="journal article" date="2004" name="J. Biol. Chem.">
        <title>Cti6 is an Rpd3-Sin3 histone deacetylase-associated protein required for growth under iron-limiting conditions in Saccharomyces cerevisiae.</title>
        <authorList>
            <person name="Puig S."/>
            <person name="Lau M."/>
            <person name="Thiele D.J."/>
        </authorList>
    </citation>
    <scope>FUNCTION</scope>
    <scope>INDUCTION</scope>
    <scope>SUBCELLULAR LOCATION</scope>
    <scope>MUTAGENESIS OF CYS-95 AND HIS-100</scope>
</reference>
<reference key="9">
    <citation type="journal article" date="2005" name="Biochim. Biophys. Acta">
        <title>Stable incorporation of sequence specific repressors Ash1 and Ume6 into the Rpd3L complex.</title>
        <authorList>
            <person name="Carrozza M.J."/>
            <person name="Florens L."/>
            <person name="Swanson S.K."/>
            <person name="Shia W.-J."/>
            <person name="Anderson S."/>
            <person name="Yates J."/>
            <person name="Washburn M.P."/>
            <person name="Workman J.L."/>
        </authorList>
    </citation>
    <scope>IDENTIFICATION IN THE RPD3C(L) COMPLEX</scope>
    <scope>IDENTIFICATION BY MASS SPECTROMETRY</scope>
</reference>
<reference key="10">
    <citation type="journal article" date="2005" name="Cell">
        <title>Cotranscriptional set2 methylation of histone H3 lysine 36 recruits a repressive Rpd3 complex.</title>
        <authorList>
            <person name="Keogh M.-C."/>
            <person name="Kurdistani S.K."/>
            <person name="Morris S.A."/>
            <person name="Ahn S.H."/>
            <person name="Podolny V."/>
            <person name="Collins S.R."/>
            <person name="Schuldiner M."/>
            <person name="Chin K."/>
            <person name="Punna T."/>
            <person name="Thompson N.J."/>
            <person name="Boone C."/>
            <person name="Emili A."/>
            <person name="Weissman J.S."/>
            <person name="Hughes T.R."/>
            <person name="Strahl B.D."/>
            <person name="Grunstein M."/>
            <person name="Greenblatt J.F."/>
            <person name="Buratowski S."/>
            <person name="Krogan N.J."/>
        </authorList>
    </citation>
    <scope>IDENTIFICATION IN THE RPD3C(L) COMPLEX</scope>
    <scope>IDENTIFICATION BY MASS SPECTROMETRY</scope>
</reference>
<reference key="11">
    <citation type="journal article" date="2006" name="EMBO J.">
        <title>Recruitment of Tup1p and Cti6p regulates heme-deficient expression of Aft1p target genes.</title>
        <authorList>
            <person name="Crisp R.J."/>
            <person name="Adkins E.M."/>
            <person name="Kimmel E."/>
            <person name="Kaplan J."/>
        </authorList>
    </citation>
    <scope>FUNCTION</scope>
</reference>
<reference key="12">
    <citation type="journal article" date="2007" name="J. Proteome Res.">
        <title>Large-scale phosphorylation analysis of alpha-factor-arrested Saccharomyces cerevisiae.</title>
        <authorList>
            <person name="Li X."/>
            <person name="Gerber S.A."/>
            <person name="Rudner A.D."/>
            <person name="Beausoleil S.A."/>
            <person name="Haas W."/>
            <person name="Villen J."/>
            <person name="Elias J.E."/>
            <person name="Gygi S.P."/>
        </authorList>
    </citation>
    <scope>IDENTIFICATION BY MASS SPECTROMETRY [LARGE SCALE ANALYSIS]</scope>
    <source>
        <strain>ADR376</strain>
    </source>
</reference>
<reference key="13">
    <citation type="journal article" date="2008" name="Mol. Cell. Proteomics">
        <title>A multidimensional chromatography technology for in-depth phosphoproteome analysis.</title>
        <authorList>
            <person name="Albuquerque C.P."/>
            <person name="Smolka M.B."/>
            <person name="Payne S.H."/>
            <person name="Bafna V."/>
            <person name="Eng J."/>
            <person name="Zhou H."/>
        </authorList>
    </citation>
    <scope>PHOSPHORYLATION [LARGE SCALE ANALYSIS] AT SER-216</scope>
    <scope>IDENTIFICATION BY MASS SPECTROMETRY [LARGE SCALE ANALYSIS]</scope>
</reference>
<reference key="14">
    <citation type="journal article" date="2009" name="Science">
        <title>Global analysis of Cdk1 substrate phosphorylation sites provides insights into evolution.</title>
        <authorList>
            <person name="Holt L.J."/>
            <person name="Tuch B.B."/>
            <person name="Villen J."/>
            <person name="Johnson A.D."/>
            <person name="Gygi S.P."/>
            <person name="Morgan D.O."/>
        </authorList>
    </citation>
    <scope>PHOSPHORYLATION [LARGE SCALE ANALYSIS] AT THR-174; SER-175; THR-177; SER-216 AND SER-267</scope>
    <scope>IDENTIFICATION BY MASS SPECTROMETRY [LARGE SCALE ANALYSIS]</scope>
</reference>